<comment type="function">
    <text evidence="2 4 6">Plays an essential role in protein N-glycosylation. Catalyzes the transfer of N-acetylglucosamine (GlcNAc) onto the free terminal mannose moiety in the core structure of the nascent N-linked glycan chain, giving rise to the second branch in complex glycans.</text>
</comment>
<comment type="catalytic activity">
    <reaction evidence="4 5 6">
        <text>an N(4)-{beta-D-GlcNAc-(1-&gt;2)-alpha-D-Man-(1-&gt;3)-[alpha-D-Man-(1-&gt;6)]-beta-D-Man-(1-&gt;4)-beta-D-GlcNAc-(1-&gt;4)-beta-D-GlcNAc}-L-asparaginyl-[protein] + UDP-N-acetyl-alpha-D-glucosamine = N(4)-{beta-D-GlcNAc-(1-&gt;2)-alpha-D-Man-(1-&gt;3)-[beta-D-GlcNAc-(1-&gt;2)-alpha-D-Man-(1-&gt;6)]-beta-D-Man-(1-&gt;4)-beta-D-GlcNAc-(1-&gt;4)-beta-D-GlcNAc}-L-asparaginyl-[protein] + UDP + H(+)</text>
        <dbReference type="Rhea" id="RHEA:12941"/>
        <dbReference type="Rhea" id="RHEA-COMP:13526"/>
        <dbReference type="Rhea" id="RHEA-COMP:14369"/>
        <dbReference type="ChEBI" id="CHEBI:15378"/>
        <dbReference type="ChEBI" id="CHEBI:57705"/>
        <dbReference type="ChEBI" id="CHEBI:58223"/>
        <dbReference type="ChEBI" id="CHEBI:60615"/>
        <dbReference type="ChEBI" id="CHEBI:60651"/>
        <dbReference type="EC" id="2.4.1.143"/>
    </reaction>
</comment>
<comment type="cofactor">
    <cofactor evidence="4">
        <name>Mn(2+)</name>
        <dbReference type="ChEBI" id="CHEBI:29035"/>
    </cofactor>
</comment>
<comment type="pathway">
    <text evidence="2 4 5 6">Protein modification; protein glycosylation.</text>
</comment>
<comment type="subunit">
    <text evidence="3">Homodimer.</text>
</comment>
<comment type="subcellular location">
    <subcellularLocation>
        <location evidence="3">Golgi apparatus membrane</location>
        <topology evidence="7">Single-pass type II membrane protein</topology>
    </subcellularLocation>
</comment>
<comment type="disease" evidence="2 6">
    <disease id="DI-00347">
        <name>Congenital disorder of glycosylation 2A</name>
        <acronym>CDG2A</acronym>
        <description>A multisystem disorder caused by a defect in glycoprotein biosynthesis and characterized by under-glycosylated serum glycoproteins. Congenital disorders of glycosylation result in a wide variety of clinical features, such as defects in the nervous system development, psychomotor retardation, dysmorphic features, hypotonia, coagulation disorders, and immunodeficiency. The broad spectrum of features reflects the critical role of N-glycoproteins during embryonic development, differentiation, and maintenance of cell functions.</description>
        <dbReference type="MIM" id="212066"/>
    </disease>
    <text>The disease is caused by variants affecting the gene represented in this entry.</text>
</comment>
<comment type="similarity">
    <text evidence="7">Belongs to the glycosyltransferase 16 (GT16) protein family.</text>
</comment>
<comment type="online information" name="Functional Glycomics Gateway - GTase">
    <link uri="http://www.functionalglycomics.org/glycomics/molecule/jsp/glycoEnzyme/viewGlycoEnzyme.jsp?gbpId=gt_hum_534"/>
    <text>Alpha-1,6-mannosyl-glycoprotein 2-beta-N-acetylglucosaminyltransferase</text>
</comment>
<protein>
    <recommendedName>
        <fullName>Alpha-1,6-mannosyl-glycoprotein 2-beta-N-acetylglucosaminyltransferase</fullName>
        <ecNumber evidence="4 5 6">2.4.1.143</ecNumber>
    </recommendedName>
    <alternativeName>
        <fullName>Beta-1,2-N-acetylglucosaminyltransferase II</fullName>
    </alternativeName>
    <alternativeName>
        <fullName>GlcNAc-T II</fullName>
        <shortName>GNT-II</shortName>
    </alternativeName>
    <alternativeName>
        <fullName>Mannoside acetylglucosaminyltransferase 2</fullName>
    </alternativeName>
    <alternativeName>
        <fullName>N-glycosyl-oligosaccharide-glycoprotein N-acetylglucosaminyltransferase II</fullName>
    </alternativeName>
</protein>
<organism>
    <name type="scientific">Homo sapiens</name>
    <name type="common">Human</name>
    <dbReference type="NCBI Taxonomy" id="9606"/>
    <lineage>
        <taxon>Eukaryota</taxon>
        <taxon>Metazoa</taxon>
        <taxon>Chordata</taxon>
        <taxon>Craniata</taxon>
        <taxon>Vertebrata</taxon>
        <taxon>Euteleostomi</taxon>
        <taxon>Mammalia</taxon>
        <taxon>Eutheria</taxon>
        <taxon>Euarchontoglires</taxon>
        <taxon>Primates</taxon>
        <taxon>Haplorrhini</taxon>
        <taxon>Catarrhini</taxon>
        <taxon>Hominidae</taxon>
        <taxon>Homo</taxon>
    </lineage>
</organism>
<accession>Q10469</accession>
<accession>B3KPC5</accession>
<accession>B3KQM0</accession>
<evidence type="ECO:0000255" key="1"/>
<evidence type="ECO:0000269" key="2">
    <source>
    </source>
</evidence>
<evidence type="ECO:0000269" key="3">
    <source>
    </source>
</evidence>
<evidence type="ECO:0000269" key="4">
    <source>
    </source>
</evidence>
<evidence type="ECO:0000269" key="5">
    <source>
    </source>
</evidence>
<evidence type="ECO:0000269" key="6">
    <source>
    </source>
</evidence>
<evidence type="ECO:0000305" key="7"/>
<evidence type="ECO:0007744" key="8">
    <source>
        <dbReference type="PDB" id="5VCM"/>
    </source>
</evidence>
<evidence type="ECO:0007744" key="9">
    <source>
        <dbReference type="PDB" id="5VCR"/>
    </source>
</evidence>
<evidence type="ECO:0007744" key="10">
    <source>
        <dbReference type="PDB" id="5VCS"/>
    </source>
</evidence>
<evidence type="ECO:0007829" key="11">
    <source>
        <dbReference type="PDB" id="5VCM"/>
    </source>
</evidence>
<evidence type="ECO:0007829" key="12">
    <source>
        <dbReference type="PDB" id="5VCS"/>
    </source>
</evidence>
<sequence length="447" mass="51550">MRFRIYKRKVLILTLVVAACGFVLWSSNGRQRKNEALAPPLLDAEPARGAGGRGGDHPSVAVGIRRVSNVSAASLVPAVPQPEADNLTLRYRSLVYQLNFDQTLRNVDKAGTWAPRELVLVVQVHNRPEYLRLLLDSLRKAQGIDNVLVIFSHDFWSTEINQLIAGVNFCPVLQVFFPFSIQLYPNEFPGSDPRDCPRDLPKNAALKLGCINAEYPDSFGHYREAKFSQTKHHWWWKLHFVWERVKILRDYAGLILFLEEDHYLAPDFYHVFKKMWKLKQQECPECDVLSLGTYSASRSFYGMADKVDVKTWKSTEHNMGLALTRNAYQKLIECTDTFCTYDDYNWDWTLQYLTVSCLPKFWKVLVPQIPRIFHAGDCGMHHKKTCRPSTQSAQIESLLNNNKQYMFPETLTISEKFTVVAISPPRKNGGWGDIRDHELCKSYRRLQ</sequence>
<keyword id="KW-0002">3D-structure</keyword>
<keyword id="KW-0900">Congenital disorder of glycosylation</keyword>
<keyword id="KW-0903">Direct protein sequencing</keyword>
<keyword id="KW-0225">Disease variant</keyword>
<keyword id="KW-1015">Disulfide bond</keyword>
<keyword id="KW-0325">Glycoprotein</keyword>
<keyword id="KW-0328">Glycosyltransferase</keyword>
<keyword id="KW-0333">Golgi apparatus</keyword>
<keyword id="KW-0464">Manganese</keyword>
<keyword id="KW-0472">Membrane</keyword>
<keyword id="KW-0479">Metal-binding</keyword>
<keyword id="KW-1267">Proteomics identification</keyword>
<keyword id="KW-1185">Reference proteome</keyword>
<keyword id="KW-0735">Signal-anchor</keyword>
<keyword id="KW-0808">Transferase</keyword>
<keyword id="KW-0812">Transmembrane</keyword>
<keyword id="KW-1133">Transmembrane helix</keyword>
<reference key="1">
    <citation type="journal article" date="1995" name="Eur. J. Biochem.">
        <title>The human UDP-N-acetylglucosamine: alpha-6-D-mannoside-beta-1,2-N-acetylglucosaminyltransferase II gene (MGAT2). Cloning of genomic DNA, localization to chromosome 14q21, expression in insect cells and purification of the recombinant protein.</title>
        <authorList>
            <person name="Tan J."/>
            <person name="D'Agostaro A.F."/>
            <person name="Bendiak B."/>
            <person name="Reck F."/>
            <person name="Sarkar M."/>
            <person name="Squire J.A."/>
            <person name="Leong P."/>
            <person name="Schachter H."/>
        </authorList>
    </citation>
    <scope>NUCLEOTIDE SEQUENCE [GENOMIC DNA]</scope>
    <scope>PROTEIN SEQUENCE OF 1-16</scope>
    <scope>CATALYTIC ACTIVITY</scope>
    <scope>PATHWAY</scope>
    <source>
        <tissue>Leukocyte</tissue>
    </source>
</reference>
<reference key="2">
    <citation type="journal article" date="2004" name="Nat. Genet.">
        <title>Complete sequencing and characterization of 21,243 full-length human cDNAs.</title>
        <authorList>
            <person name="Ota T."/>
            <person name="Suzuki Y."/>
            <person name="Nishikawa T."/>
            <person name="Otsuki T."/>
            <person name="Sugiyama T."/>
            <person name="Irie R."/>
            <person name="Wakamatsu A."/>
            <person name="Hayashi K."/>
            <person name="Sato H."/>
            <person name="Nagai K."/>
            <person name="Kimura K."/>
            <person name="Makita H."/>
            <person name="Sekine M."/>
            <person name="Obayashi M."/>
            <person name="Nishi T."/>
            <person name="Shibahara T."/>
            <person name="Tanaka T."/>
            <person name="Ishii S."/>
            <person name="Yamamoto J."/>
            <person name="Saito K."/>
            <person name="Kawai Y."/>
            <person name="Isono Y."/>
            <person name="Nakamura Y."/>
            <person name="Nagahari K."/>
            <person name="Murakami K."/>
            <person name="Yasuda T."/>
            <person name="Iwayanagi T."/>
            <person name="Wagatsuma M."/>
            <person name="Shiratori A."/>
            <person name="Sudo H."/>
            <person name="Hosoiri T."/>
            <person name="Kaku Y."/>
            <person name="Kodaira H."/>
            <person name="Kondo H."/>
            <person name="Sugawara M."/>
            <person name="Takahashi M."/>
            <person name="Kanda K."/>
            <person name="Yokoi T."/>
            <person name="Furuya T."/>
            <person name="Kikkawa E."/>
            <person name="Omura Y."/>
            <person name="Abe K."/>
            <person name="Kamihara K."/>
            <person name="Katsuta N."/>
            <person name="Sato K."/>
            <person name="Tanikawa M."/>
            <person name="Yamazaki M."/>
            <person name="Ninomiya K."/>
            <person name="Ishibashi T."/>
            <person name="Yamashita H."/>
            <person name="Murakawa K."/>
            <person name="Fujimori K."/>
            <person name="Tanai H."/>
            <person name="Kimata M."/>
            <person name="Watanabe M."/>
            <person name="Hiraoka S."/>
            <person name="Chiba Y."/>
            <person name="Ishida S."/>
            <person name="Ono Y."/>
            <person name="Takiguchi S."/>
            <person name="Watanabe S."/>
            <person name="Yosida M."/>
            <person name="Hotuta T."/>
            <person name="Kusano J."/>
            <person name="Kanehori K."/>
            <person name="Takahashi-Fujii A."/>
            <person name="Hara H."/>
            <person name="Tanase T.-O."/>
            <person name="Nomura Y."/>
            <person name="Togiya S."/>
            <person name="Komai F."/>
            <person name="Hara R."/>
            <person name="Takeuchi K."/>
            <person name="Arita M."/>
            <person name="Imose N."/>
            <person name="Musashino K."/>
            <person name="Yuuki H."/>
            <person name="Oshima A."/>
            <person name="Sasaki N."/>
            <person name="Aotsuka S."/>
            <person name="Yoshikawa Y."/>
            <person name="Matsunawa H."/>
            <person name="Ichihara T."/>
            <person name="Shiohata N."/>
            <person name="Sano S."/>
            <person name="Moriya S."/>
            <person name="Momiyama H."/>
            <person name="Satoh N."/>
            <person name="Takami S."/>
            <person name="Terashima Y."/>
            <person name="Suzuki O."/>
            <person name="Nakagawa S."/>
            <person name="Senoh A."/>
            <person name="Mizoguchi H."/>
            <person name="Goto Y."/>
            <person name="Shimizu F."/>
            <person name="Wakebe H."/>
            <person name="Hishigaki H."/>
            <person name="Watanabe T."/>
            <person name="Sugiyama A."/>
            <person name="Takemoto M."/>
            <person name="Kawakami B."/>
            <person name="Yamazaki M."/>
            <person name="Watanabe K."/>
            <person name="Kumagai A."/>
            <person name="Itakura S."/>
            <person name="Fukuzumi Y."/>
            <person name="Fujimori Y."/>
            <person name="Komiyama M."/>
            <person name="Tashiro H."/>
            <person name="Tanigami A."/>
            <person name="Fujiwara T."/>
            <person name="Ono T."/>
            <person name="Yamada K."/>
            <person name="Fujii Y."/>
            <person name="Ozaki K."/>
            <person name="Hirao M."/>
            <person name="Ohmori Y."/>
            <person name="Kawabata A."/>
            <person name="Hikiji T."/>
            <person name="Kobatake N."/>
            <person name="Inagaki H."/>
            <person name="Ikema Y."/>
            <person name="Okamoto S."/>
            <person name="Okitani R."/>
            <person name="Kawakami T."/>
            <person name="Noguchi S."/>
            <person name="Itoh T."/>
            <person name="Shigeta K."/>
            <person name="Senba T."/>
            <person name="Matsumura K."/>
            <person name="Nakajima Y."/>
            <person name="Mizuno T."/>
            <person name="Morinaga M."/>
            <person name="Sasaki M."/>
            <person name="Togashi T."/>
            <person name="Oyama M."/>
            <person name="Hata H."/>
            <person name="Watanabe M."/>
            <person name="Komatsu T."/>
            <person name="Mizushima-Sugano J."/>
            <person name="Satoh T."/>
            <person name="Shirai Y."/>
            <person name="Takahashi Y."/>
            <person name="Nakagawa K."/>
            <person name="Okumura K."/>
            <person name="Nagase T."/>
            <person name="Nomura N."/>
            <person name="Kikuchi H."/>
            <person name="Masuho Y."/>
            <person name="Yamashita R."/>
            <person name="Nakai K."/>
            <person name="Yada T."/>
            <person name="Nakamura Y."/>
            <person name="Ohara O."/>
            <person name="Isogai T."/>
            <person name="Sugano S."/>
        </authorList>
    </citation>
    <scope>NUCLEOTIDE SEQUENCE [LARGE SCALE MRNA]</scope>
    <source>
        <tissue>Placenta</tissue>
    </source>
</reference>
<reference key="3">
    <citation type="submission" date="2005-09" db="EMBL/GenBank/DDBJ databases">
        <authorList>
            <person name="Mural R.J."/>
            <person name="Istrail S."/>
            <person name="Sutton G.G."/>
            <person name="Florea L."/>
            <person name="Halpern A.L."/>
            <person name="Mobarry C.M."/>
            <person name="Lippert R."/>
            <person name="Walenz B."/>
            <person name="Shatkay H."/>
            <person name="Dew I."/>
            <person name="Miller J.R."/>
            <person name="Flanigan M.J."/>
            <person name="Edwards N.J."/>
            <person name="Bolanos R."/>
            <person name="Fasulo D."/>
            <person name="Halldorsson B.V."/>
            <person name="Hannenhalli S."/>
            <person name="Turner R."/>
            <person name="Yooseph S."/>
            <person name="Lu F."/>
            <person name="Nusskern D.R."/>
            <person name="Shue B.C."/>
            <person name="Zheng X.H."/>
            <person name="Zhong F."/>
            <person name="Delcher A.L."/>
            <person name="Huson D.H."/>
            <person name="Kravitz S.A."/>
            <person name="Mouchard L."/>
            <person name="Reinert K."/>
            <person name="Remington K.A."/>
            <person name="Clark A.G."/>
            <person name="Waterman M.S."/>
            <person name="Eichler E.E."/>
            <person name="Adams M.D."/>
            <person name="Hunkapiller M.W."/>
            <person name="Myers E.W."/>
            <person name="Venter J.C."/>
        </authorList>
    </citation>
    <scope>NUCLEOTIDE SEQUENCE [LARGE SCALE GENOMIC DNA]</scope>
</reference>
<reference key="4">
    <citation type="journal article" date="2004" name="Genome Res.">
        <title>The status, quality, and expansion of the NIH full-length cDNA project: the Mammalian Gene Collection (MGC).</title>
        <authorList>
            <consortium name="The MGC Project Team"/>
        </authorList>
    </citation>
    <scope>NUCLEOTIDE SEQUENCE [LARGE SCALE MRNA]</scope>
    <source>
        <tissue>Brain</tissue>
    </source>
</reference>
<reference key="5">
    <citation type="journal article" date="2010" name="J. Biol. Chem.">
        <title>Golgi N-glycosyltransferases form both homo- and heterodimeric enzyme complexes in live cells.</title>
        <authorList>
            <person name="Hassinen A."/>
            <person name="Rivinoja A."/>
            <person name="Kauppila A."/>
            <person name="Kellokumpu S."/>
        </authorList>
    </citation>
    <scope>SUBCELLULAR LOCATION</scope>
    <scope>SUBUNIT</scope>
</reference>
<reference evidence="8 9 10" key="6">
    <citation type="journal article" date="2018" name="Proc. Natl. Acad. Sci. U.S.A.">
        <title>Human N-acetylglucosaminyltransferase II substrate recognition uses a modular architecture that includes a convergent exosite.</title>
        <authorList>
            <person name="Kadirvelraj R."/>
            <person name="Yang J.Y."/>
            <person name="Sanders J.H."/>
            <person name="Liu L."/>
            <person name="Ramiah A."/>
            <person name="Prabhakar P.K."/>
            <person name="Boons G.J."/>
            <person name="Wood Z.A."/>
            <person name="Moremen K.W."/>
        </authorList>
    </citation>
    <scope>X-RAY CRYSTALLOGRAPHY (1.60 ANGSTROMS) OF 29-447 IN COMPLEXES WITH MANGANESE AND UDP</scope>
    <scope>FUNCTION</scope>
    <scope>CATALYTIC ACTIVITY</scope>
    <scope>COFACTOR</scope>
    <scope>PATHWAY</scope>
    <scope>GLYCOSYLATION AT ASN-86</scope>
    <scope>DISULFIDE BONDS</scope>
    <scope>MUTAGENESIS OF ARG-198; ASP-217; GLU-259; TYR-294; ASN-318; TYR-344; TRP-346 AND ASP-347</scope>
</reference>
<reference key="7">
    <citation type="journal article" date="1996" name="Am. J. Hum. Genet.">
        <title>Mutations in the MGAT2 gene controlling complex N-glycan synthesis cause carbohydrate-deficient glycoprotein syndrome type II, an autosomal recessive disease with defective brain development.</title>
        <authorList>
            <person name="Tan J."/>
            <person name="Dunn J."/>
            <person name="Jaeken J."/>
            <person name="Schachter H."/>
        </authorList>
    </citation>
    <scope>VARIANTS CDG2A ARG-262 AND PHE-290</scope>
    <scope>FUNCTION</scope>
    <scope>CATALYTIC ACTIVITY</scope>
    <scope>PATHWAY</scope>
    <scope>CHARACTERIZATION OF VARIANTS CDG2A ARG-262 AND PHE-290</scope>
</reference>
<reference key="8">
    <citation type="journal article" date="2000" name="J. Med. Genet.">
        <title>Congenital disorders of glycosylation IIa cause growth retardation, mental retardation, and facial dysmorphism.</title>
        <authorList>
            <person name="Cormier-Daire V."/>
            <person name="Amiel J."/>
            <person name="Vuillaumier-Barrot S."/>
            <person name="Tan J."/>
            <person name="Durand G."/>
            <person name="Munnich A."/>
            <person name="Le Merrer M."/>
            <person name="Seta N."/>
        </authorList>
    </citation>
    <scope>VARIANT CDG2A ASP-318</scope>
    <scope>FUNCTION</scope>
    <scope>PATHWAY</scope>
</reference>
<name>MGAT2_HUMAN</name>
<gene>
    <name type="primary">MGAT2</name>
</gene>
<proteinExistence type="evidence at protein level"/>
<dbReference type="EC" id="2.4.1.143" evidence="4 5 6"/>
<dbReference type="EMBL" id="U15128">
    <property type="protein sequence ID" value="AAA86956.1"/>
    <property type="molecule type" value="Genomic_DNA"/>
</dbReference>
<dbReference type="EMBL" id="AK056167">
    <property type="protein sequence ID" value="BAG51637.1"/>
    <property type="molecule type" value="mRNA"/>
</dbReference>
<dbReference type="EMBL" id="AK075199">
    <property type="protein sequence ID" value="BAG52082.1"/>
    <property type="molecule type" value="mRNA"/>
</dbReference>
<dbReference type="EMBL" id="CH471078">
    <property type="protein sequence ID" value="EAW65758.1"/>
    <property type="molecule type" value="Genomic_DNA"/>
</dbReference>
<dbReference type="EMBL" id="BC006390">
    <property type="protein sequence ID" value="AAH06390.1"/>
    <property type="molecule type" value="mRNA"/>
</dbReference>
<dbReference type="CCDS" id="CCDS9690.1"/>
<dbReference type="PIR" id="S66256">
    <property type="entry name" value="S66256"/>
</dbReference>
<dbReference type="RefSeq" id="NP_002399.1">
    <property type="nucleotide sequence ID" value="NM_002408.4"/>
</dbReference>
<dbReference type="PDB" id="5VCM">
    <property type="method" value="X-ray"/>
    <property type="resolution" value="1.60 A"/>
    <property type="chains" value="A/B=29-447"/>
</dbReference>
<dbReference type="PDB" id="5VCR">
    <property type="method" value="X-ray"/>
    <property type="resolution" value="1.99 A"/>
    <property type="chains" value="A/B=29-447"/>
</dbReference>
<dbReference type="PDB" id="5VCS">
    <property type="method" value="X-ray"/>
    <property type="resolution" value="2.80 A"/>
    <property type="chains" value="A/B=29-447"/>
</dbReference>
<dbReference type="PDBsum" id="5VCM"/>
<dbReference type="PDBsum" id="5VCR"/>
<dbReference type="PDBsum" id="5VCS"/>
<dbReference type="SMR" id="Q10469"/>
<dbReference type="BioGRID" id="110403">
    <property type="interactions" value="41"/>
</dbReference>
<dbReference type="CORUM" id="Q10469"/>
<dbReference type="FunCoup" id="Q10469">
    <property type="interactions" value="1715"/>
</dbReference>
<dbReference type="IntAct" id="Q10469">
    <property type="interactions" value="19"/>
</dbReference>
<dbReference type="MINT" id="Q10469"/>
<dbReference type="STRING" id="9606.ENSP00000307423"/>
<dbReference type="BindingDB" id="Q10469"/>
<dbReference type="ChEMBL" id="CHEMBL2321630"/>
<dbReference type="CAZy" id="GT16">
    <property type="family name" value="Glycosyltransferase Family 16"/>
</dbReference>
<dbReference type="GlyCosmos" id="Q10469">
    <property type="glycosylation" value="4 sites, 1 glycan"/>
</dbReference>
<dbReference type="GlyGen" id="Q10469">
    <property type="glycosylation" value="6 sites, 1 N-linked glycan (1 site), 3 O-linked glycans (4 sites)"/>
</dbReference>
<dbReference type="iPTMnet" id="Q10469"/>
<dbReference type="PhosphoSitePlus" id="Q10469"/>
<dbReference type="SwissPalm" id="Q10469"/>
<dbReference type="BioMuta" id="MGAT2"/>
<dbReference type="DMDM" id="1708004"/>
<dbReference type="jPOST" id="Q10469"/>
<dbReference type="MassIVE" id="Q10469"/>
<dbReference type="PaxDb" id="9606-ENSP00000307423"/>
<dbReference type="PeptideAtlas" id="Q10469"/>
<dbReference type="ProteomicsDB" id="58853"/>
<dbReference type="Pumba" id="Q10469"/>
<dbReference type="Antibodypedia" id="10266">
    <property type="antibodies" value="160 antibodies from 24 providers"/>
</dbReference>
<dbReference type="DNASU" id="4247"/>
<dbReference type="Ensembl" id="ENST00000305386.4">
    <property type="protein sequence ID" value="ENSP00000307423.2"/>
    <property type="gene ID" value="ENSG00000168282.6"/>
</dbReference>
<dbReference type="GeneID" id="4247"/>
<dbReference type="KEGG" id="hsa:4247"/>
<dbReference type="MANE-Select" id="ENST00000305386.4">
    <property type="protein sequence ID" value="ENSP00000307423.2"/>
    <property type="RefSeq nucleotide sequence ID" value="NM_002408.4"/>
    <property type="RefSeq protein sequence ID" value="NP_002399.1"/>
</dbReference>
<dbReference type="UCSC" id="uc001wwr.4">
    <property type="organism name" value="human"/>
</dbReference>
<dbReference type="AGR" id="HGNC:7045"/>
<dbReference type="CTD" id="4247"/>
<dbReference type="DisGeNET" id="4247"/>
<dbReference type="GeneCards" id="MGAT2"/>
<dbReference type="GeneReviews" id="MGAT2"/>
<dbReference type="HGNC" id="HGNC:7045">
    <property type="gene designation" value="MGAT2"/>
</dbReference>
<dbReference type="HPA" id="ENSG00000168282">
    <property type="expression patterns" value="Low tissue specificity"/>
</dbReference>
<dbReference type="MalaCards" id="MGAT2"/>
<dbReference type="MIM" id="212066">
    <property type="type" value="phenotype"/>
</dbReference>
<dbReference type="MIM" id="602616">
    <property type="type" value="gene"/>
</dbReference>
<dbReference type="neXtProt" id="NX_Q10469"/>
<dbReference type="OpenTargets" id="ENSG00000168282"/>
<dbReference type="Orphanet" id="79329">
    <property type="disease" value="MGAT2-CDG"/>
</dbReference>
<dbReference type="PharmGKB" id="PA30780"/>
<dbReference type="VEuPathDB" id="HostDB:ENSG00000168282"/>
<dbReference type="eggNOG" id="KOG2791">
    <property type="taxonomic scope" value="Eukaryota"/>
</dbReference>
<dbReference type="GeneTree" id="ENSGT00390000007341"/>
<dbReference type="HOGENOM" id="CLU_032753_2_1_1"/>
<dbReference type="InParanoid" id="Q10469"/>
<dbReference type="OMA" id="FWSAEIN"/>
<dbReference type="OrthoDB" id="6019616at2759"/>
<dbReference type="PAN-GO" id="Q10469">
    <property type="GO annotations" value="3 GO annotations based on evolutionary models"/>
</dbReference>
<dbReference type="PhylomeDB" id="Q10469"/>
<dbReference type="TreeFam" id="TF314772"/>
<dbReference type="BioCyc" id="MetaCyc:HS09725-MONOMER"/>
<dbReference type="BRENDA" id="2.4.1.143">
    <property type="organism ID" value="2681"/>
</dbReference>
<dbReference type="PathwayCommons" id="Q10469"/>
<dbReference type="Reactome" id="R-HSA-4793952">
    <property type="pathway name" value="Defective MGAT2 causes CDG-2a"/>
</dbReference>
<dbReference type="Reactome" id="R-HSA-9694548">
    <property type="pathway name" value="Maturation of spike protein"/>
</dbReference>
<dbReference type="Reactome" id="R-HSA-975578">
    <property type="pathway name" value="Reactions specific to the complex N-glycan synthesis pathway"/>
</dbReference>
<dbReference type="SignaLink" id="Q10469"/>
<dbReference type="UniPathway" id="UPA00378"/>
<dbReference type="BioGRID-ORCS" id="4247">
    <property type="hits" value="57 hits in 1156 CRISPR screens"/>
</dbReference>
<dbReference type="ChiTaRS" id="MGAT2">
    <property type="organism name" value="human"/>
</dbReference>
<dbReference type="GeneWiki" id="MGAT2"/>
<dbReference type="GenomeRNAi" id="4247"/>
<dbReference type="Pharos" id="Q10469">
    <property type="development level" value="Tchem"/>
</dbReference>
<dbReference type="PRO" id="PR:Q10469"/>
<dbReference type="Proteomes" id="UP000005640">
    <property type="component" value="Chromosome 14"/>
</dbReference>
<dbReference type="RNAct" id="Q10469">
    <property type="molecule type" value="protein"/>
</dbReference>
<dbReference type="Bgee" id="ENSG00000168282">
    <property type="expression patterns" value="Expressed in jejunal mucosa and 201 other cell types or tissues"/>
</dbReference>
<dbReference type="GO" id="GO:0005794">
    <property type="term" value="C:Golgi apparatus"/>
    <property type="evidence" value="ECO:0000314"/>
    <property type="project" value="HPA"/>
</dbReference>
<dbReference type="GO" id="GO:0000139">
    <property type="term" value="C:Golgi membrane"/>
    <property type="evidence" value="ECO:0000314"/>
    <property type="project" value="UniProtKB"/>
</dbReference>
<dbReference type="GO" id="GO:0005795">
    <property type="term" value="C:Golgi stack"/>
    <property type="evidence" value="ECO:0007669"/>
    <property type="project" value="InterPro"/>
</dbReference>
<dbReference type="GO" id="GO:0016020">
    <property type="term" value="C:membrane"/>
    <property type="evidence" value="ECO:0007005"/>
    <property type="project" value="UniProtKB"/>
</dbReference>
<dbReference type="GO" id="GO:0008455">
    <property type="term" value="F:alpha-1,6-mannosylglycoprotein 2-beta-N-acetylglucosaminyltransferase activity"/>
    <property type="evidence" value="ECO:0000314"/>
    <property type="project" value="UniProtKB"/>
</dbReference>
<dbReference type="GO" id="GO:0030145">
    <property type="term" value="F:manganese ion binding"/>
    <property type="evidence" value="ECO:0000314"/>
    <property type="project" value="UniProtKB"/>
</dbReference>
<dbReference type="GO" id="GO:0042803">
    <property type="term" value="F:protein homodimerization activity"/>
    <property type="evidence" value="ECO:0000314"/>
    <property type="project" value="UniProtKB"/>
</dbReference>
<dbReference type="GO" id="GO:0009312">
    <property type="term" value="P:oligosaccharide biosynthetic process"/>
    <property type="evidence" value="ECO:0007669"/>
    <property type="project" value="InterPro"/>
</dbReference>
<dbReference type="GO" id="GO:0006487">
    <property type="term" value="P:protein N-linked glycosylation"/>
    <property type="evidence" value="ECO:0000318"/>
    <property type="project" value="GO_Central"/>
</dbReference>
<dbReference type="GO" id="GO:0018279">
    <property type="term" value="P:protein N-linked glycosylation via asparagine"/>
    <property type="evidence" value="ECO:0000314"/>
    <property type="project" value="UniProtKB"/>
</dbReference>
<dbReference type="GO" id="GO:0019082">
    <property type="term" value="P:viral protein processing"/>
    <property type="evidence" value="ECO:0000304"/>
    <property type="project" value="Reactome"/>
</dbReference>
<dbReference type="Gene3D" id="3.90.550.10">
    <property type="entry name" value="Spore Coat Polysaccharide Biosynthesis Protein SpsA, Chain A"/>
    <property type="match status" value="1"/>
</dbReference>
<dbReference type="InterPro" id="IPR007754">
    <property type="entry name" value="GlcNAc_II"/>
</dbReference>
<dbReference type="InterPro" id="IPR029044">
    <property type="entry name" value="Nucleotide-diphossugar_trans"/>
</dbReference>
<dbReference type="PANTHER" id="PTHR12871:SF0">
    <property type="entry name" value="ALPHA-1,6-MANNOSYL-GLYCOPROTEIN 2-BETA-N-ACETYLGLUCOSAMINYLTRANSFERASE"/>
    <property type="match status" value="1"/>
</dbReference>
<dbReference type="PANTHER" id="PTHR12871">
    <property type="entry name" value="BETA-1,2-N-ACETYLGLUCOSAMINYLTRANSFERASE II"/>
    <property type="match status" value="1"/>
</dbReference>
<dbReference type="Pfam" id="PF05060">
    <property type="entry name" value="MGAT2"/>
    <property type="match status" value="1"/>
</dbReference>
<dbReference type="SUPFAM" id="SSF53448">
    <property type="entry name" value="Nucleotide-diphospho-sugar transferases"/>
    <property type="match status" value="1"/>
</dbReference>
<feature type="chain" id="PRO_0000080517" description="Alpha-1,6-mannosyl-glycoprotein 2-beta-N-acetylglucosaminyltransferase">
    <location>
        <begin position="1"/>
        <end position="447"/>
    </location>
</feature>
<feature type="topological domain" description="Cytoplasmic" evidence="1">
    <location>
        <begin position="1"/>
        <end position="9"/>
    </location>
</feature>
<feature type="transmembrane region" description="Helical; Signal-anchor for type II membrane protein" evidence="1">
    <location>
        <begin position="10"/>
        <end position="29"/>
    </location>
</feature>
<feature type="topological domain" description="Lumenal" evidence="1">
    <location>
        <begin position="30"/>
        <end position="447"/>
    </location>
</feature>
<feature type="binding site" evidence="4 8">
    <location>
        <begin position="123"/>
        <end position="127"/>
    </location>
    <ligand>
        <name>substrate</name>
    </ligand>
</feature>
<feature type="binding site" evidence="4 8">
    <location>
        <position position="154"/>
    </location>
    <ligand>
        <name>substrate</name>
    </ligand>
</feature>
<feature type="binding site" evidence="4 8">
    <location>
        <begin position="229"/>
        <end position="233"/>
    </location>
    <ligand>
        <name>substrate</name>
    </ligand>
</feature>
<feature type="binding site" evidence="4 8">
    <location>
        <position position="261"/>
    </location>
    <ligand>
        <name>Mn(2+)</name>
        <dbReference type="ChEBI" id="CHEBI:29035"/>
    </ligand>
</feature>
<feature type="binding site" evidence="4 8">
    <location>
        <position position="298"/>
    </location>
    <ligand>
        <name>substrate</name>
    </ligand>
</feature>
<feature type="binding site" evidence="4 8">
    <location>
        <position position="374"/>
    </location>
    <ligand>
        <name>Mn(2+)</name>
        <dbReference type="ChEBI" id="CHEBI:29035"/>
    </ligand>
</feature>
<feature type="glycosylation site" description="N-linked (GlcNAc...) asparagine" evidence="1">
    <location>
        <position position="69"/>
    </location>
</feature>
<feature type="glycosylation site" description="N-linked (GlcNAc...) asparagine" evidence="4 8 9 10">
    <location>
        <position position="86"/>
    </location>
</feature>
<feature type="disulfide bond" evidence="4 8 9 10">
    <location>
        <begin position="196"/>
        <end position="210"/>
    </location>
</feature>
<feature type="disulfide bond" evidence="4 8 9 10">
    <location>
        <begin position="283"/>
        <end position="286"/>
    </location>
</feature>
<feature type="disulfide bond" evidence="4 8 9 10">
    <location>
        <begin position="334"/>
        <end position="357"/>
    </location>
</feature>
<feature type="disulfide bond" evidence="4 8 9 10">
    <location>
        <begin position="339"/>
        <end position="440"/>
    </location>
</feature>
<feature type="disulfide bond" evidence="4 8">
    <location>
        <begin position="378"/>
        <end position="386"/>
    </location>
</feature>
<feature type="sequence variant" id="VAR_003415" description="In CDG2A; strongly reduced protein levels; loss of enzyme activity; dbSNP:rs104894447." evidence="6">
    <original>H</original>
    <variation>R</variation>
    <location>
        <position position="262"/>
    </location>
</feature>
<feature type="sequence variant" id="VAR_003416" description="In CDG2A; strongly reduced protein levels; loss of enzyme activity; dbSNP:rs104894446." evidence="6">
    <original>S</original>
    <variation>F</variation>
    <location>
        <position position="290"/>
    </location>
</feature>
<feature type="sequence variant" id="VAR_012343" description="In CDG2A; dbSNP:rs104894448." evidence="2">
    <original>N</original>
    <variation>D</variation>
    <location>
        <position position="318"/>
    </location>
</feature>
<feature type="mutagenesis site" description="Strongly decreased catalytic activity and affinity for UDP-GlcNAc." evidence="4">
    <original>R</original>
    <variation>A</variation>
    <location>
        <position position="198"/>
    </location>
</feature>
<feature type="mutagenesis site" description="Nearly abolishes catalytic activity." evidence="4">
    <original>D</original>
    <variation>A</variation>
    <location>
        <position position="217"/>
    </location>
</feature>
<feature type="mutagenesis site" description="Loss of catalytic activity." evidence="4">
    <original>E</original>
    <variation>A</variation>
    <location>
        <position position="259"/>
    </location>
</feature>
<feature type="mutagenesis site" description="Strongly decreased catalytic activity and affinity for UDP-GlcNAc." evidence="4">
    <original>Y</original>
    <variation>A</variation>
    <location>
        <position position="294"/>
    </location>
</feature>
<feature type="mutagenesis site" description="Strongly decreased catalytic activity and affinity for UDP-GlcNAc." evidence="4">
    <original>N</original>
    <variation>A</variation>
    <location>
        <position position="318"/>
    </location>
</feature>
<feature type="mutagenesis site" description="Nearly abolishes catalytic activity and strongly decreases affinity for UDP-GlcNAc." evidence="4">
    <original>Y</original>
    <variation>A</variation>
    <location>
        <position position="344"/>
    </location>
</feature>
<feature type="mutagenesis site" description="Loss of catalytic activity." evidence="4">
    <original>W</original>
    <variation>A</variation>
    <location>
        <position position="346"/>
    </location>
</feature>
<feature type="mutagenesis site" description="Loss of catalytic activity." evidence="4">
    <original>D</original>
    <variation>A</variation>
    <location>
        <position position="347"/>
    </location>
</feature>
<feature type="sequence conflict" description="In Ref. 2; BAG52082." evidence="7" ref="2">
    <original>S</original>
    <variation>R</variation>
    <location>
        <position position="299"/>
    </location>
</feature>
<feature type="helix" evidence="11">
    <location>
        <begin position="87"/>
        <end position="101"/>
    </location>
</feature>
<feature type="helix" evidence="11">
    <location>
        <begin position="110"/>
        <end position="112"/>
    </location>
</feature>
<feature type="strand" evidence="11">
    <location>
        <begin position="117"/>
        <end position="124"/>
    </location>
</feature>
<feature type="helix" evidence="11">
    <location>
        <begin position="128"/>
        <end position="140"/>
    </location>
</feature>
<feature type="strand" evidence="11">
    <location>
        <begin position="148"/>
        <end position="155"/>
    </location>
</feature>
<feature type="helix" evidence="11">
    <location>
        <begin position="158"/>
        <end position="165"/>
    </location>
</feature>
<feature type="strand" evidence="11">
    <location>
        <begin position="172"/>
        <end position="176"/>
    </location>
</feature>
<feature type="turn" evidence="11">
    <location>
        <begin position="181"/>
        <end position="183"/>
    </location>
</feature>
<feature type="strand" evidence="12">
    <location>
        <begin position="185"/>
        <end position="187"/>
    </location>
</feature>
<feature type="helix" evidence="11">
    <location>
        <begin position="202"/>
        <end position="208"/>
    </location>
</feature>
<feature type="turn" evidence="11">
    <location>
        <begin position="211"/>
        <end position="214"/>
    </location>
</feature>
<feature type="helix" evidence="11">
    <location>
        <begin position="225"/>
        <end position="243"/>
    </location>
</feature>
<feature type="helix" evidence="11">
    <location>
        <begin position="246"/>
        <end position="248"/>
    </location>
</feature>
<feature type="strand" evidence="11">
    <location>
        <begin position="253"/>
        <end position="259"/>
    </location>
</feature>
<feature type="strand" evidence="11">
    <location>
        <begin position="262"/>
        <end position="264"/>
    </location>
</feature>
<feature type="helix" evidence="11">
    <location>
        <begin position="268"/>
        <end position="282"/>
    </location>
</feature>
<feature type="strand" evidence="11">
    <location>
        <begin position="288"/>
        <end position="291"/>
    </location>
</feature>
<feature type="turn" evidence="11">
    <location>
        <begin position="301"/>
        <end position="305"/>
    </location>
</feature>
<feature type="strand" evidence="11">
    <location>
        <begin position="306"/>
        <end position="311"/>
    </location>
</feature>
<feature type="helix" evidence="11">
    <location>
        <begin position="314"/>
        <end position="317"/>
    </location>
</feature>
<feature type="strand" evidence="11">
    <location>
        <begin position="319"/>
        <end position="323"/>
    </location>
</feature>
<feature type="helix" evidence="11">
    <location>
        <begin position="325"/>
        <end position="332"/>
    </location>
</feature>
<feature type="helix" evidence="11">
    <location>
        <begin position="335"/>
        <end position="340"/>
    </location>
</feature>
<feature type="strand" evidence="11">
    <location>
        <begin position="341"/>
        <end position="344"/>
    </location>
</feature>
<feature type="helix" evidence="11">
    <location>
        <begin position="346"/>
        <end position="356"/>
    </location>
</feature>
<feature type="strand" evidence="11">
    <location>
        <begin position="358"/>
        <end position="360"/>
    </location>
</feature>
<feature type="strand" evidence="11">
    <location>
        <begin position="363"/>
        <end position="369"/>
    </location>
</feature>
<feature type="strand" evidence="11">
    <location>
        <begin position="371"/>
        <end position="374"/>
    </location>
</feature>
<feature type="turn" evidence="11">
    <location>
        <begin position="380"/>
        <end position="382"/>
    </location>
</feature>
<feature type="helix" evidence="11">
    <location>
        <begin position="388"/>
        <end position="401"/>
    </location>
</feature>
<feature type="helix" evidence="11">
    <location>
        <begin position="403"/>
        <end position="405"/>
    </location>
</feature>
<feature type="strand" evidence="11">
    <location>
        <begin position="412"/>
        <end position="420"/>
    </location>
</feature>
<feature type="helix" evidence="11">
    <location>
        <begin position="434"/>
        <end position="442"/>
    </location>
</feature>
<feature type="turn" evidence="11">
    <location>
        <begin position="443"/>
        <end position="445"/>
    </location>
</feature>